<evidence type="ECO:0000255" key="1">
    <source>
        <dbReference type="HAMAP-Rule" id="MF_00730"/>
    </source>
</evidence>
<accession>A3MZE7</accession>
<sequence>MSINVTEIVLHQIHQTEGETSELNTVLRDNLLAISPEVEQMMLQLHQAYQSKAKAYGIFKNESIFAQQLNRLLEQETDFLPFSHSCAKMLSSELAKYPFASGGTFILCRYNFLATDYLFIALIDSRTSMLVDDQLEIKRTEYLDITQYDIACRINLTELKINAQSNRYLTFIKGRVGRKIADFFMDFLSAEEGLNPQLQNQTLLQAVSDYCDQGELSAPQTREVKKQVFEYCKGQINSGEEIALSELSEALPTLNEVDFAQFTQEQEYGLEENIPPVRNALKTLTKYSGSGKGVTISFNADLLGERLIWDELNDTLTIKGLPANLRDQLARNK</sequence>
<organism>
    <name type="scientific">Actinobacillus pleuropneumoniae serotype 5b (strain L20)</name>
    <dbReference type="NCBI Taxonomy" id="416269"/>
    <lineage>
        <taxon>Bacteria</taxon>
        <taxon>Pseudomonadati</taxon>
        <taxon>Pseudomonadota</taxon>
        <taxon>Gammaproteobacteria</taxon>
        <taxon>Pasteurellales</taxon>
        <taxon>Pasteurellaceae</taxon>
        <taxon>Actinobacillus</taxon>
    </lineage>
</organism>
<name>NDPA_ACTP2</name>
<dbReference type="EMBL" id="CP000569">
    <property type="protein sequence ID" value="ABN73533.1"/>
    <property type="molecule type" value="Genomic_DNA"/>
</dbReference>
<dbReference type="RefSeq" id="WP_011848375.1">
    <property type="nucleotide sequence ID" value="NC_009053.1"/>
</dbReference>
<dbReference type="SMR" id="A3MZE7"/>
<dbReference type="STRING" id="416269.APL_0429"/>
<dbReference type="EnsemblBacteria" id="ABN73533">
    <property type="protein sequence ID" value="ABN73533"/>
    <property type="gene ID" value="APL_0429"/>
</dbReference>
<dbReference type="KEGG" id="apl:APL_0429"/>
<dbReference type="PATRIC" id="fig|416269.6.peg.442"/>
<dbReference type="eggNOG" id="COG3081">
    <property type="taxonomic scope" value="Bacteria"/>
</dbReference>
<dbReference type="HOGENOM" id="CLU_063050_0_1_6"/>
<dbReference type="Proteomes" id="UP000001432">
    <property type="component" value="Chromosome"/>
</dbReference>
<dbReference type="GO" id="GO:0043590">
    <property type="term" value="C:bacterial nucleoid"/>
    <property type="evidence" value="ECO:0007669"/>
    <property type="project" value="TreeGrafter"/>
</dbReference>
<dbReference type="GO" id="GO:0005737">
    <property type="term" value="C:cytoplasm"/>
    <property type="evidence" value="ECO:0007669"/>
    <property type="project" value="UniProtKB-UniRule"/>
</dbReference>
<dbReference type="GO" id="GO:0003690">
    <property type="term" value="F:double-stranded DNA binding"/>
    <property type="evidence" value="ECO:0007669"/>
    <property type="project" value="TreeGrafter"/>
</dbReference>
<dbReference type="GO" id="GO:0003727">
    <property type="term" value="F:single-stranded RNA binding"/>
    <property type="evidence" value="ECO:0007669"/>
    <property type="project" value="TreeGrafter"/>
</dbReference>
<dbReference type="HAMAP" id="MF_00730">
    <property type="entry name" value="NdpA"/>
    <property type="match status" value="1"/>
</dbReference>
<dbReference type="InterPro" id="IPR007358">
    <property type="entry name" value="Nucleoid_associated_NdpA"/>
</dbReference>
<dbReference type="NCBIfam" id="NF001557">
    <property type="entry name" value="PRK00378.1"/>
    <property type="match status" value="1"/>
</dbReference>
<dbReference type="PANTHER" id="PTHR38772">
    <property type="match status" value="1"/>
</dbReference>
<dbReference type="PANTHER" id="PTHR38772:SF1">
    <property type="entry name" value="NUCLEOID-ASSOCIATED PROTEIN YEJK"/>
    <property type="match status" value="1"/>
</dbReference>
<dbReference type="Pfam" id="PF04245">
    <property type="entry name" value="NA37"/>
    <property type="match status" value="1"/>
</dbReference>
<feature type="chain" id="PRO_1000045920" description="Nucleoid-associated protein APL_0429">
    <location>
        <begin position="1"/>
        <end position="333"/>
    </location>
</feature>
<protein>
    <recommendedName>
        <fullName evidence="1">Nucleoid-associated protein APL_0429</fullName>
    </recommendedName>
</protein>
<reference key="1">
    <citation type="journal article" date="2008" name="J. Bacteriol.">
        <title>The complete genome sequence of Actinobacillus pleuropneumoniae L20 (serotype 5b).</title>
        <authorList>
            <person name="Foote S.J."/>
            <person name="Bosse J.T."/>
            <person name="Bouevitch A.B."/>
            <person name="Langford P.R."/>
            <person name="Young N.M."/>
            <person name="Nash J.H.E."/>
        </authorList>
    </citation>
    <scope>NUCLEOTIDE SEQUENCE [LARGE SCALE GENOMIC DNA]</scope>
    <source>
        <strain>L20</strain>
    </source>
</reference>
<gene>
    <name type="ordered locus">APL_0429</name>
</gene>
<keyword id="KW-0963">Cytoplasm</keyword>
<keyword id="KW-1185">Reference proteome</keyword>
<comment type="subcellular location">
    <subcellularLocation>
        <location evidence="1">Cytoplasm</location>
        <location evidence="1">Nucleoid</location>
    </subcellularLocation>
</comment>
<comment type="similarity">
    <text evidence="1">Belongs to the YejK family.</text>
</comment>
<proteinExistence type="inferred from homology"/>